<keyword id="KW-0413">Isomerase</keyword>
<keyword id="KW-0460">Magnesium</keyword>
<keyword id="KW-0479">Metal-binding</keyword>
<keyword id="KW-0597">Phosphoprotein</keyword>
<comment type="function">
    <text evidence="1">Catalyzes the conversion of glucosamine-6-phosphate to glucosamine-1-phosphate.</text>
</comment>
<comment type="catalytic activity">
    <reaction evidence="1">
        <text>alpha-D-glucosamine 1-phosphate = D-glucosamine 6-phosphate</text>
        <dbReference type="Rhea" id="RHEA:23424"/>
        <dbReference type="ChEBI" id="CHEBI:58516"/>
        <dbReference type="ChEBI" id="CHEBI:58725"/>
        <dbReference type="EC" id="5.4.2.10"/>
    </reaction>
</comment>
<comment type="cofactor">
    <cofactor evidence="1">
        <name>Mg(2+)</name>
        <dbReference type="ChEBI" id="CHEBI:18420"/>
    </cofactor>
    <text evidence="1">Binds 1 Mg(2+) ion per subunit.</text>
</comment>
<comment type="PTM">
    <text evidence="1">Activated by phosphorylation.</text>
</comment>
<comment type="similarity">
    <text evidence="1">Belongs to the phosphohexose mutase family.</text>
</comment>
<accession>Q6A6T5</accession>
<evidence type="ECO:0000255" key="1">
    <source>
        <dbReference type="HAMAP-Rule" id="MF_01554"/>
    </source>
</evidence>
<sequence>MARLFGTDGVRGVANQDLTAELALDLSVAAAHVLGEAGAFGHRQPTALVARDPRASGEFLEAAVCAGLASAGVDVLRVGVIPTPAAAYLVNEYRTDLGVMLSASHNPMPDNGIKFFSRGGVKLPDDLEDAIEQRMGEPWARPIGDKVGRIRYTPQAVDTYVDHLVRSLRQQDTLKGMKIVLDTANGASFHTATAAFTTQGAEVIAIHDQPDGLNINERCGSTHPEKLQAKVVEVGADMGLAFDGDADRCLAVDHEGNIVDGDHIIAILALALQEDHRLASNTVVATIMSNLGLIIAMRAHDIHVDQTKVGDRYVLESMNANGFSLGGEQSGHVIMSEFATTGDGVLTGLHLAARVARTGKTLKELASVMTRLPQALINVRGVDKLRAGIDPDVNKAVADANQKLGDAGRVVLRPSGTEPVVRVMVEAGTQEEADQICSELAETVKMSLAL</sequence>
<gene>
    <name evidence="1" type="primary">glmM</name>
    <name type="ordered locus">PPA1801</name>
</gene>
<feature type="chain" id="PRO_0000147936" description="Phosphoglucosamine mutase">
    <location>
        <begin position="1"/>
        <end position="450"/>
    </location>
</feature>
<feature type="active site" description="Phosphoserine intermediate" evidence="1">
    <location>
        <position position="104"/>
    </location>
</feature>
<feature type="binding site" description="via phosphate group" evidence="1">
    <location>
        <position position="104"/>
    </location>
    <ligand>
        <name>Mg(2+)</name>
        <dbReference type="ChEBI" id="CHEBI:18420"/>
    </ligand>
</feature>
<feature type="binding site" evidence="1">
    <location>
        <position position="243"/>
    </location>
    <ligand>
        <name>Mg(2+)</name>
        <dbReference type="ChEBI" id="CHEBI:18420"/>
    </ligand>
</feature>
<feature type="binding site" evidence="1">
    <location>
        <position position="245"/>
    </location>
    <ligand>
        <name>Mg(2+)</name>
        <dbReference type="ChEBI" id="CHEBI:18420"/>
    </ligand>
</feature>
<feature type="binding site" evidence="1">
    <location>
        <position position="247"/>
    </location>
    <ligand>
        <name>Mg(2+)</name>
        <dbReference type="ChEBI" id="CHEBI:18420"/>
    </ligand>
</feature>
<feature type="modified residue" description="Phosphoserine" evidence="1">
    <location>
        <position position="104"/>
    </location>
</feature>
<reference key="1">
    <citation type="journal article" date="2004" name="Science">
        <title>The complete genome sequence of Propionibacterium acnes, a commensal of human skin.</title>
        <authorList>
            <person name="Brueggemann H."/>
            <person name="Henne A."/>
            <person name="Hoster F."/>
            <person name="Liesegang H."/>
            <person name="Wiezer A."/>
            <person name="Strittmatter A."/>
            <person name="Hujer S."/>
            <person name="Duerre P."/>
            <person name="Gottschalk G."/>
        </authorList>
    </citation>
    <scope>NUCLEOTIDE SEQUENCE [LARGE SCALE GENOMIC DNA]</scope>
    <source>
        <strain>DSM 16379 / KPA171202</strain>
    </source>
</reference>
<dbReference type="EC" id="5.4.2.10" evidence="1"/>
<dbReference type="EMBL" id="AE017283">
    <property type="protein sequence ID" value="AAT83528.1"/>
    <property type="molecule type" value="Genomic_DNA"/>
</dbReference>
<dbReference type="RefSeq" id="WP_002514806.1">
    <property type="nucleotide sequence ID" value="NZ_CP025935.1"/>
</dbReference>
<dbReference type="SMR" id="Q6A6T5"/>
<dbReference type="EnsemblBacteria" id="AAT83528">
    <property type="protein sequence ID" value="AAT83528"/>
    <property type="gene ID" value="PPA1801"/>
</dbReference>
<dbReference type="KEGG" id="pac:PPA1801"/>
<dbReference type="eggNOG" id="COG1109">
    <property type="taxonomic scope" value="Bacteria"/>
</dbReference>
<dbReference type="HOGENOM" id="CLU_016950_7_0_11"/>
<dbReference type="Proteomes" id="UP000000603">
    <property type="component" value="Chromosome"/>
</dbReference>
<dbReference type="GO" id="GO:0005829">
    <property type="term" value="C:cytosol"/>
    <property type="evidence" value="ECO:0007669"/>
    <property type="project" value="TreeGrafter"/>
</dbReference>
<dbReference type="GO" id="GO:0000287">
    <property type="term" value="F:magnesium ion binding"/>
    <property type="evidence" value="ECO:0007669"/>
    <property type="project" value="UniProtKB-UniRule"/>
</dbReference>
<dbReference type="GO" id="GO:0008966">
    <property type="term" value="F:phosphoglucosamine mutase activity"/>
    <property type="evidence" value="ECO:0007669"/>
    <property type="project" value="UniProtKB-UniRule"/>
</dbReference>
<dbReference type="GO" id="GO:0004615">
    <property type="term" value="F:phosphomannomutase activity"/>
    <property type="evidence" value="ECO:0007669"/>
    <property type="project" value="TreeGrafter"/>
</dbReference>
<dbReference type="GO" id="GO:0005975">
    <property type="term" value="P:carbohydrate metabolic process"/>
    <property type="evidence" value="ECO:0007669"/>
    <property type="project" value="InterPro"/>
</dbReference>
<dbReference type="GO" id="GO:0009252">
    <property type="term" value="P:peptidoglycan biosynthetic process"/>
    <property type="evidence" value="ECO:0007669"/>
    <property type="project" value="TreeGrafter"/>
</dbReference>
<dbReference type="GO" id="GO:0006048">
    <property type="term" value="P:UDP-N-acetylglucosamine biosynthetic process"/>
    <property type="evidence" value="ECO:0007669"/>
    <property type="project" value="TreeGrafter"/>
</dbReference>
<dbReference type="CDD" id="cd05802">
    <property type="entry name" value="GlmM"/>
    <property type="match status" value="1"/>
</dbReference>
<dbReference type="FunFam" id="3.30.310.50:FF:000001">
    <property type="entry name" value="Phosphoglucosamine mutase"/>
    <property type="match status" value="1"/>
</dbReference>
<dbReference type="FunFam" id="3.40.120.10:FF:000001">
    <property type="entry name" value="Phosphoglucosamine mutase"/>
    <property type="match status" value="1"/>
</dbReference>
<dbReference type="FunFam" id="3.40.120.10:FF:000002">
    <property type="entry name" value="Phosphoglucosamine mutase"/>
    <property type="match status" value="1"/>
</dbReference>
<dbReference type="Gene3D" id="3.40.120.10">
    <property type="entry name" value="Alpha-D-Glucose-1,6-Bisphosphate, subunit A, domain 3"/>
    <property type="match status" value="3"/>
</dbReference>
<dbReference type="Gene3D" id="3.30.310.50">
    <property type="entry name" value="Alpha-D-phosphohexomutase, C-terminal domain"/>
    <property type="match status" value="1"/>
</dbReference>
<dbReference type="HAMAP" id="MF_01554_B">
    <property type="entry name" value="GlmM_B"/>
    <property type="match status" value="1"/>
</dbReference>
<dbReference type="InterPro" id="IPR005844">
    <property type="entry name" value="A-D-PHexomutase_a/b/a-I"/>
</dbReference>
<dbReference type="InterPro" id="IPR016055">
    <property type="entry name" value="A-D-PHexomutase_a/b/a-I/II/III"/>
</dbReference>
<dbReference type="InterPro" id="IPR005845">
    <property type="entry name" value="A-D-PHexomutase_a/b/a-II"/>
</dbReference>
<dbReference type="InterPro" id="IPR005846">
    <property type="entry name" value="A-D-PHexomutase_a/b/a-III"/>
</dbReference>
<dbReference type="InterPro" id="IPR005843">
    <property type="entry name" value="A-D-PHexomutase_C"/>
</dbReference>
<dbReference type="InterPro" id="IPR036900">
    <property type="entry name" value="A-D-PHexomutase_C_sf"/>
</dbReference>
<dbReference type="InterPro" id="IPR016066">
    <property type="entry name" value="A-D-PHexomutase_CS"/>
</dbReference>
<dbReference type="InterPro" id="IPR005841">
    <property type="entry name" value="Alpha-D-phosphohexomutase_SF"/>
</dbReference>
<dbReference type="InterPro" id="IPR006352">
    <property type="entry name" value="GlmM_bact"/>
</dbReference>
<dbReference type="InterPro" id="IPR050060">
    <property type="entry name" value="Phosphoglucosamine_mutase"/>
</dbReference>
<dbReference type="NCBIfam" id="TIGR01455">
    <property type="entry name" value="glmM"/>
    <property type="match status" value="1"/>
</dbReference>
<dbReference type="PANTHER" id="PTHR42946:SF1">
    <property type="entry name" value="PHOSPHOGLUCOMUTASE (ALPHA-D-GLUCOSE-1,6-BISPHOSPHATE-DEPENDENT)"/>
    <property type="match status" value="1"/>
</dbReference>
<dbReference type="PANTHER" id="PTHR42946">
    <property type="entry name" value="PHOSPHOHEXOSE MUTASE"/>
    <property type="match status" value="1"/>
</dbReference>
<dbReference type="Pfam" id="PF02878">
    <property type="entry name" value="PGM_PMM_I"/>
    <property type="match status" value="1"/>
</dbReference>
<dbReference type="Pfam" id="PF02879">
    <property type="entry name" value="PGM_PMM_II"/>
    <property type="match status" value="1"/>
</dbReference>
<dbReference type="Pfam" id="PF02880">
    <property type="entry name" value="PGM_PMM_III"/>
    <property type="match status" value="1"/>
</dbReference>
<dbReference type="Pfam" id="PF00408">
    <property type="entry name" value="PGM_PMM_IV"/>
    <property type="match status" value="1"/>
</dbReference>
<dbReference type="PRINTS" id="PR00509">
    <property type="entry name" value="PGMPMM"/>
</dbReference>
<dbReference type="SUPFAM" id="SSF55957">
    <property type="entry name" value="Phosphoglucomutase, C-terminal domain"/>
    <property type="match status" value="1"/>
</dbReference>
<dbReference type="SUPFAM" id="SSF53738">
    <property type="entry name" value="Phosphoglucomutase, first 3 domains"/>
    <property type="match status" value="3"/>
</dbReference>
<dbReference type="PROSITE" id="PS00710">
    <property type="entry name" value="PGM_PMM"/>
    <property type="match status" value="1"/>
</dbReference>
<proteinExistence type="inferred from homology"/>
<organism>
    <name type="scientific">Cutibacterium acnes (strain DSM 16379 / KPA171202)</name>
    <name type="common">Propionibacterium acnes</name>
    <dbReference type="NCBI Taxonomy" id="267747"/>
    <lineage>
        <taxon>Bacteria</taxon>
        <taxon>Bacillati</taxon>
        <taxon>Actinomycetota</taxon>
        <taxon>Actinomycetes</taxon>
        <taxon>Propionibacteriales</taxon>
        <taxon>Propionibacteriaceae</taxon>
        <taxon>Cutibacterium</taxon>
    </lineage>
</organism>
<protein>
    <recommendedName>
        <fullName evidence="1">Phosphoglucosamine mutase</fullName>
        <ecNumber evidence="1">5.4.2.10</ecNumber>
    </recommendedName>
</protein>
<name>GLMM_CUTAK</name>